<feature type="initiator methionine" description="Removed" evidence="5 15">
    <location>
        <position position="1"/>
    </location>
</feature>
<feature type="chain" id="PRO_0000320006" description="Serum response factor-binding protein 1">
    <location>
        <begin position="2"/>
        <end position="429"/>
    </location>
</feature>
<feature type="region of interest" description="Disordered" evidence="3">
    <location>
        <begin position="131"/>
        <end position="157"/>
    </location>
</feature>
<feature type="region of interest" description="Disordered" evidence="3">
    <location>
        <begin position="176"/>
        <end position="429"/>
    </location>
</feature>
<feature type="coiled-coil region" evidence="2">
    <location>
        <begin position="42"/>
        <end position="67"/>
    </location>
</feature>
<feature type="coiled-coil region" evidence="2">
    <location>
        <begin position="108"/>
        <end position="146"/>
    </location>
</feature>
<feature type="compositionally biased region" description="Polar residues" evidence="3">
    <location>
        <begin position="146"/>
        <end position="157"/>
    </location>
</feature>
<feature type="compositionally biased region" description="Basic and acidic residues" evidence="3">
    <location>
        <begin position="183"/>
        <end position="195"/>
    </location>
</feature>
<feature type="compositionally biased region" description="Acidic residues" evidence="3">
    <location>
        <begin position="249"/>
        <end position="265"/>
    </location>
</feature>
<feature type="compositionally biased region" description="Basic and acidic residues" evidence="3">
    <location>
        <begin position="296"/>
        <end position="341"/>
    </location>
</feature>
<feature type="compositionally biased region" description="Basic and acidic residues" evidence="3">
    <location>
        <begin position="357"/>
        <end position="367"/>
    </location>
</feature>
<feature type="compositionally biased region" description="Polar residues" evidence="3">
    <location>
        <begin position="373"/>
        <end position="383"/>
    </location>
</feature>
<feature type="modified residue" description="N-acetylalanine" evidence="5 15">
    <location>
        <position position="2"/>
    </location>
</feature>
<feature type="modified residue" description="Phosphoserine" evidence="13 14 16 17">
    <location>
        <position position="203"/>
    </location>
</feature>
<feature type="modified residue" description="Phosphoserine" evidence="14">
    <location>
        <position position="205"/>
    </location>
</feature>
<feature type="modified residue" description="Phosphoserine" evidence="13 14 16">
    <location>
        <position position="264"/>
    </location>
</feature>
<feature type="modified residue" description="Phosphoserine" evidence="12">
    <location>
        <position position="279"/>
    </location>
</feature>
<feature type="modified residue" description="Phosphoserine" evidence="12">
    <location>
        <position position="281"/>
    </location>
</feature>
<feature type="modified residue" description="Phosphoserine" evidence="16">
    <location>
        <position position="349"/>
    </location>
</feature>
<feature type="modified residue" description="Phosphoserine" evidence="16">
    <location>
        <position position="351"/>
    </location>
</feature>
<feature type="modified residue" description="Phosphoserine" evidence="16">
    <location>
        <position position="367"/>
    </location>
</feature>
<feature type="cross-link" description="Glycyl lysine isopeptide (Lys-Gly) (interchain with G-Cter in SUMO2)" evidence="18">
    <location>
        <position position="190"/>
    </location>
</feature>
<feature type="cross-link" description="Glycyl lysine isopeptide (Lys-Gly) (interchain with G-Cter in SUMO2)" evidence="18">
    <location>
        <position position="316"/>
    </location>
</feature>
<feature type="sequence conflict" description="In Ref. 2; BAB71631." evidence="6" ref="2">
    <original>F</original>
    <variation>S</variation>
    <location>
        <position position="345"/>
    </location>
</feature>
<name>SRFB1_HUMAN</name>
<dbReference type="EMBL" id="AY611630">
    <property type="protein sequence ID" value="AAU25829.2"/>
    <property type="molecule type" value="mRNA"/>
</dbReference>
<dbReference type="EMBL" id="AK058015">
    <property type="protein sequence ID" value="BAB71631.1"/>
    <property type="status" value="ALT_FRAME"/>
    <property type="molecule type" value="mRNA"/>
</dbReference>
<dbReference type="EMBL" id="CH471086">
    <property type="protein sequence ID" value="EAW48900.1"/>
    <property type="molecule type" value="Genomic_DNA"/>
</dbReference>
<dbReference type="EMBL" id="BC017102">
    <property type="protein sequence ID" value="AAH17102.1"/>
    <property type="molecule type" value="mRNA"/>
</dbReference>
<dbReference type="EMBL" id="BC031222">
    <property type="protein sequence ID" value="AAH31222.1"/>
    <property type="molecule type" value="mRNA"/>
</dbReference>
<dbReference type="CCDS" id="CCDS43354.1"/>
<dbReference type="RefSeq" id="NP_689759.2">
    <property type="nucleotide sequence ID" value="NM_152546.3"/>
</dbReference>
<dbReference type="SMR" id="Q8NEF9"/>
<dbReference type="BioGRID" id="127495">
    <property type="interactions" value="72"/>
</dbReference>
<dbReference type="FunCoup" id="Q8NEF9">
    <property type="interactions" value="3130"/>
</dbReference>
<dbReference type="IntAct" id="Q8NEF9">
    <property type="interactions" value="49"/>
</dbReference>
<dbReference type="MINT" id="Q8NEF9"/>
<dbReference type="STRING" id="9606.ENSP00000341324"/>
<dbReference type="GlyCosmos" id="Q8NEF9">
    <property type="glycosylation" value="2 sites, 1 glycan"/>
</dbReference>
<dbReference type="GlyGen" id="Q8NEF9">
    <property type="glycosylation" value="2 sites, 1 O-linked glycan (2 sites)"/>
</dbReference>
<dbReference type="iPTMnet" id="Q8NEF9"/>
<dbReference type="PhosphoSitePlus" id="Q8NEF9"/>
<dbReference type="BioMuta" id="SRFBP1"/>
<dbReference type="DMDM" id="74751249"/>
<dbReference type="jPOST" id="Q8NEF9"/>
<dbReference type="MassIVE" id="Q8NEF9"/>
<dbReference type="PaxDb" id="9606-ENSP00000341324"/>
<dbReference type="PeptideAtlas" id="Q8NEF9"/>
<dbReference type="ProteomicsDB" id="73159"/>
<dbReference type="Pumba" id="Q8NEF9"/>
<dbReference type="TopDownProteomics" id="Q8NEF9"/>
<dbReference type="Antibodypedia" id="25600">
    <property type="antibodies" value="133 antibodies from 23 providers"/>
</dbReference>
<dbReference type="DNASU" id="153443"/>
<dbReference type="Ensembl" id="ENST00000339397.5">
    <property type="protein sequence ID" value="ENSP00000341324.4"/>
    <property type="gene ID" value="ENSG00000151304.6"/>
</dbReference>
<dbReference type="GeneID" id="153443"/>
<dbReference type="KEGG" id="hsa:153443"/>
<dbReference type="MANE-Select" id="ENST00000339397.5">
    <property type="protein sequence ID" value="ENSP00000341324.4"/>
    <property type="RefSeq nucleotide sequence ID" value="NM_152546.3"/>
    <property type="RefSeq protein sequence ID" value="NP_689759.2"/>
</dbReference>
<dbReference type="UCSC" id="uc003kst.2">
    <property type="organism name" value="human"/>
</dbReference>
<dbReference type="AGR" id="HGNC:26333"/>
<dbReference type="CTD" id="153443"/>
<dbReference type="DisGeNET" id="153443"/>
<dbReference type="GeneCards" id="SRFBP1"/>
<dbReference type="HGNC" id="HGNC:26333">
    <property type="gene designation" value="SRFBP1"/>
</dbReference>
<dbReference type="HPA" id="ENSG00000151304">
    <property type="expression patterns" value="Low tissue specificity"/>
</dbReference>
<dbReference type="MalaCards" id="SRFBP1"/>
<dbReference type="MIM" id="610479">
    <property type="type" value="gene"/>
</dbReference>
<dbReference type="neXtProt" id="NX_Q8NEF9"/>
<dbReference type="OpenTargets" id="ENSG00000151304"/>
<dbReference type="PharmGKB" id="PA142670870"/>
<dbReference type="VEuPathDB" id="HostDB:ENSG00000151304"/>
<dbReference type="eggNOG" id="ENOG502QV1I">
    <property type="taxonomic scope" value="Eukaryota"/>
</dbReference>
<dbReference type="GeneTree" id="ENSGT00390000006478"/>
<dbReference type="HOGENOM" id="CLU_054142_0_0_1"/>
<dbReference type="InParanoid" id="Q8NEF9"/>
<dbReference type="OMA" id="GFQQNEP"/>
<dbReference type="OrthoDB" id="3364872at2759"/>
<dbReference type="PAN-GO" id="Q8NEF9">
    <property type="GO annotations" value="3 GO annotations based on evolutionary models"/>
</dbReference>
<dbReference type="PhylomeDB" id="Q8NEF9"/>
<dbReference type="TreeFam" id="TF328596"/>
<dbReference type="PathwayCommons" id="Q8NEF9"/>
<dbReference type="SignaLink" id="Q8NEF9"/>
<dbReference type="BioGRID-ORCS" id="153443">
    <property type="hits" value="635 hits in 1159 CRISPR screens"/>
</dbReference>
<dbReference type="CD-CODE" id="91857CE7">
    <property type="entry name" value="Nucleolus"/>
</dbReference>
<dbReference type="ChiTaRS" id="SRFBP1">
    <property type="organism name" value="human"/>
</dbReference>
<dbReference type="GenomeRNAi" id="153443"/>
<dbReference type="Pharos" id="Q8NEF9">
    <property type="development level" value="Tbio"/>
</dbReference>
<dbReference type="PRO" id="PR:Q8NEF9"/>
<dbReference type="Proteomes" id="UP000005640">
    <property type="component" value="Chromosome 5"/>
</dbReference>
<dbReference type="RNAct" id="Q8NEF9">
    <property type="molecule type" value="protein"/>
</dbReference>
<dbReference type="Bgee" id="ENSG00000151304">
    <property type="expression patterns" value="Expressed in calcaneal tendon and 172 other cell types or tissues"/>
</dbReference>
<dbReference type="GO" id="GO:0030686">
    <property type="term" value="C:90S preribosome"/>
    <property type="evidence" value="ECO:0000318"/>
    <property type="project" value="GO_Central"/>
</dbReference>
<dbReference type="GO" id="GO:0005634">
    <property type="term" value="C:nucleus"/>
    <property type="evidence" value="ECO:0000318"/>
    <property type="project" value="GO_Central"/>
</dbReference>
<dbReference type="GO" id="GO:0048471">
    <property type="term" value="C:perinuclear region of cytoplasm"/>
    <property type="evidence" value="ECO:0007669"/>
    <property type="project" value="UniProtKB-SubCell"/>
</dbReference>
<dbReference type="GO" id="GO:0003723">
    <property type="term" value="F:RNA binding"/>
    <property type="evidence" value="ECO:0007005"/>
    <property type="project" value="UniProtKB"/>
</dbReference>
<dbReference type="GO" id="GO:0030490">
    <property type="term" value="P:maturation of SSU-rRNA"/>
    <property type="evidence" value="ECO:0000318"/>
    <property type="project" value="GO_Central"/>
</dbReference>
<dbReference type="InterPro" id="IPR037393">
    <property type="entry name" value="Bud22/SRFB1"/>
</dbReference>
<dbReference type="InterPro" id="IPR015158">
    <property type="entry name" value="Bud22_dom"/>
</dbReference>
<dbReference type="PANTHER" id="PTHR23325">
    <property type="entry name" value="SERUM RESPONSE FACTOR-BINDING"/>
    <property type="match status" value="1"/>
</dbReference>
<dbReference type="PANTHER" id="PTHR23325:SF1">
    <property type="entry name" value="SERUM RESPONSE FACTOR-BINDING PROTEIN 1"/>
    <property type="match status" value="1"/>
</dbReference>
<dbReference type="Pfam" id="PF09073">
    <property type="entry name" value="BUD22"/>
    <property type="match status" value="1"/>
</dbReference>
<accession>Q8NEF9</accession>
<accession>Q5QFI2</accession>
<accession>Q96AH4</accession>
<accession>Q96DK2</accession>
<reference evidence="6 9" key="1">
    <citation type="journal article" date="2004" name="J. Biol. Chem.">
        <title>Identification of a novel serum response factor cofactor in cardiac gene regulation.</title>
        <authorList>
            <person name="Zhang X."/>
            <person name="Azhar G."/>
            <person name="Zhong Y."/>
            <person name="Wei J.Y."/>
        </authorList>
    </citation>
    <scope>NUCLEOTIDE SEQUENCE [MRNA]</scope>
    <scope>TISSUE SPECIFICITY</scope>
    <scope>DEVELOPMENTAL STAGE</scope>
    <source>
        <tissue evidence="9">Heart</tissue>
    </source>
</reference>
<reference evidence="10" key="2">
    <citation type="journal article" date="2004" name="Nat. Genet.">
        <title>Complete sequencing and characterization of 21,243 full-length human cDNAs.</title>
        <authorList>
            <person name="Ota T."/>
            <person name="Suzuki Y."/>
            <person name="Nishikawa T."/>
            <person name="Otsuki T."/>
            <person name="Sugiyama T."/>
            <person name="Irie R."/>
            <person name="Wakamatsu A."/>
            <person name="Hayashi K."/>
            <person name="Sato H."/>
            <person name="Nagai K."/>
            <person name="Kimura K."/>
            <person name="Makita H."/>
            <person name="Sekine M."/>
            <person name="Obayashi M."/>
            <person name="Nishi T."/>
            <person name="Shibahara T."/>
            <person name="Tanaka T."/>
            <person name="Ishii S."/>
            <person name="Yamamoto J."/>
            <person name="Saito K."/>
            <person name="Kawai Y."/>
            <person name="Isono Y."/>
            <person name="Nakamura Y."/>
            <person name="Nagahari K."/>
            <person name="Murakami K."/>
            <person name="Yasuda T."/>
            <person name="Iwayanagi T."/>
            <person name="Wagatsuma M."/>
            <person name="Shiratori A."/>
            <person name="Sudo H."/>
            <person name="Hosoiri T."/>
            <person name="Kaku Y."/>
            <person name="Kodaira H."/>
            <person name="Kondo H."/>
            <person name="Sugawara M."/>
            <person name="Takahashi M."/>
            <person name="Kanda K."/>
            <person name="Yokoi T."/>
            <person name="Furuya T."/>
            <person name="Kikkawa E."/>
            <person name="Omura Y."/>
            <person name="Abe K."/>
            <person name="Kamihara K."/>
            <person name="Katsuta N."/>
            <person name="Sato K."/>
            <person name="Tanikawa M."/>
            <person name="Yamazaki M."/>
            <person name="Ninomiya K."/>
            <person name="Ishibashi T."/>
            <person name="Yamashita H."/>
            <person name="Murakawa K."/>
            <person name="Fujimori K."/>
            <person name="Tanai H."/>
            <person name="Kimata M."/>
            <person name="Watanabe M."/>
            <person name="Hiraoka S."/>
            <person name="Chiba Y."/>
            <person name="Ishida S."/>
            <person name="Ono Y."/>
            <person name="Takiguchi S."/>
            <person name="Watanabe S."/>
            <person name="Yosida M."/>
            <person name="Hotuta T."/>
            <person name="Kusano J."/>
            <person name="Kanehori K."/>
            <person name="Takahashi-Fujii A."/>
            <person name="Hara H."/>
            <person name="Tanase T.-O."/>
            <person name="Nomura Y."/>
            <person name="Togiya S."/>
            <person name="Komai F."/>
            <person name="Hara R."/>
            <person name="Takeuchi K."/>
            <person name="Arita M."/>
            <person name="Imose N."/>
            <person name="Musashino K."/>
            <person name="Yuuki H."/>
            <person name="Oshima A."/>
            <person name="Sasaki N."/>
            <person name="Aotsuka S."/>
            <person name="Yoshikawa Y."/>
            <person name="Matsunawa H."/>
            <person name="Ichihara T."/>
            <person name="Shiohata N."/>
            <person name="Sano S."/>
            <person name="Moriya S."/>
            <person name="Momiyama H."/>
            <person name="Satoh N."/>
            <person name="Takami S."/>
            <person name="Terashima Y."/>
            <person name="Suzuki O."/>
            <person name="Nakagawa S."/>
            <person name="Senoh A."/>
            <person name="Mizoguchi H."/>
            <person name="Goto Y."/>
            <person name="Shimizu F."/>
            <person name="Wakebe H."/>
            <person name="Hishigaki H."/>
            <person name="Watanabe T."/>
            <person name="Sugiyama A."/>
            <person name="Takemoto M."/>
            <person name="Kawakami B."/>
            <person name="Yamazaki M."/>
            <person name="Watanabe K."/>
            <person name="Kumagai A."/>
            <person name="Itakura S."/>
            <person name="Fukuzumi Y."/>
            <person name="Fujimori Y."/>
            <person name="Komiyama M."/>
            <person name="Tashiro H."/>
            <person name="Tanigami A."/>
            <person name="Fujiwara T."/>
            <person name="Ono T."/>
            <person name="Yamada K."/>
            <person name="Fujii Y."/>
            <person name="Ozaki K."/>
            <person name="Hirao M."/>
            <person name="Ohmori Y."/>
            <person name="Kawabata A."/>
            <person name="Hikiji T."/>
            <person name="Kobatake N."/>
            <person name="Inagaki H."/>
            <person name="Ikema Y."/>
            <person name="Okamoto S."/>
            <person name="Okitani R."/>
            <person name="Kawakami T."/>
            <person name="Noguchi S."/>
            <person name="Itoh T."/>
            <person name="Shigeta K."/>
            <person name="Senba T."/>
            <person name="Matsumura K."/>
            <person name="Nakajima Y."/>
            <person name="Mizuno T."/>
            <person name="Morinaga M."/>
            <person name="Sasaki M."/>
            <person name="Togashi T."/>
            <person name="Oyama M."/>
            <person name="Hata H."/>
            <person name="Watanabe M."/>
            <person name="Komatsu T."/>
            <person name="Mizushima-Sugano J."/>
            <person name="Satoh T."/>
            <person name="Shirai Y."/>
            <person name="Takahashi Y."/>
            <person name="Nakagawa K."/>
            <person name="Okumura K."/>
            <person name="Nagase T."/>
            <person name="Nomura N."/>
            <person name="Kikuchi H."/>
            <person name="Masuho Y."/>
            <person name="Yamashita R."/>
            <person name="Nakai K."/>
            <person name="Yada T."/>
            <person name="Nakamura Y."/>
            <person name="Ohara O."/>
            <person name="Isogai T."/>
            <person name="Sugano S."/>
        </authorList>
    </citation>
    <scope>NUCLEOTIDE SEQUENCE [LARGE SCALE MRNA]</scope>
    <source>
        <tissue evidence="10">Gastric mucosa</tissue>
    </source>
</reference>
<reference evidence="11" key="3">
    <citation type="submission" date="2005-09" db="EMBL/GenBank/DDBJ databases">
        <authorList>
            <person name="Mural R.J."/>
            <person name="Istrail S."/>
            <person name="Sutton G.G."/>
            <person name="Florea L."/>
            <person name="Halpern A.L."/>
            <person name="Mobarry C.M."/>
            <person name="Lippert R."/>
            <person name="Walenz B."/>
            <person name="Shatkay H."/>
            <person name="Dew I."/>
            <person name="Miller J.R."/>
            <person name="Flanigan M.J."/>
            <person name="Edwards N.J."/>
            <person name="Bolanos R."/>
            <person name="Fasulo D."/>
            <person name="Halldorsson B.V."/>
            <person name="Hannenhalli S."/>
            <person name="Turner R."/>
            <person name="Yooseph S."/>
            <person name="Lu F."/>
            <person name="Nusskern D.R."/>
            <person name="Shue B.C."/>
            <person name="Zheng X.H."/>
            <person name="Zhong F."/>
            <person name="Delcher A.L."/>
            <person name="Huson D.H."/>
            <person name="Kravitz S.A."/>
            <person name="Mouchard L."/>
            <person name="Reinert K."/>
            <person name="Remington K.A."/>
            <person name="Clark A.G."/>
            <person name="Waterman M.S."/>
            <person name="Eichler E.E."/>
            <person name="Adams M.D."/>
            <person name="Hunkapiller M.W."/>
            <person name="Myers E.W."/>
            <person name="Venter J.C."/>
        </authorList>
    </citation>
    <scope>NUCLEOTIDE SEQUENCE [LARGE SCALE GENOMIC DNA]</scope>
</reference>
<reference evidence="8" key="4">
    <citation type="journal article" date="2004" name="Genome Res.">
        <title>The status, quality, and expansion of the NIH full-length cDNA project: the Mammalian Gene Collection (MGC).</title>
        <authorList>
            <consortium name="The MGC Project Team"/>
        </authorList>
    </citation>
    <scope>NUCLEOTIDE SEQUENCE [LARGE SCALE MRNA]</scope>
    <source>
        <tissue evidence="7">Retinoblastoma</tissue>
        <tissue evidence="8">Testis</tissue>
    </source>
</reference>
<reference key="5">
    <citation type="journal article" date="2006" name="Cell">
        <title>Global, in vivo, and site-specific phosphorylation dynamics in signaling networks.</title>
        <authorList>
            <person name="Olsen J.V."/>
            <person name="Blagoev B."/>
            <person name="Gnad F."/>
            <person name="Macek B."/>
            <person name="Kumar C."/>
            <person name="Mortensen P."/>
            <person name="Mann M."/>
        </authorList>
    </citation>
    <scope>IDENTIFICATION BY MASS SPECTROMETRY [LARGE SCALE ANALYSIS]</scope>
    <source>
        <tissue>Cervix carcinoma</tissue>
    </source>
</reference>
<reference key="6">
    <citation type="journal article" date="2008" name="Proc. Natl. Acad. Sci. U.S.A.">
        <title>A quantitative atlas of mitotic phosphorylation.</title>
        <authorList>
            <person name="Dephoure N."/>
            <person name="Zhou C."/>
            <person name="Villen J."/>
            <person name="Beausoleil S.A."/>
            <person name="Bakalarski C.E."/>
            <person name="Elledge S.J."/>
            <person name="Gygi S.P."/>
        </authorList>
    </citation>
    <scope>PHOSPHORYLATION [LARGE SCALE ANALYSIS] AT SER-279 AND SER-281</scope>
    <scope>IDENTIFICATION BY MASS SPECTROMETRY [LARGE SCALE ANALYSIS]</scope>
    <source>
        <tissue>Cervix carcinoma</tissue>
    </source>
</reference>
<reference key="7">
    <citation type="journal article" date="2009" name="Sci. Signal.">
        <title>Quantitative phosphoproteomic analysis of T cell receptor signaling reveals system-wide modulation of protein-protein interactions.</title>
        <authorList>
            <person name="Mayya V."/>
            <person name="Lundgren D.H."/>
            <person name="Hwang S.-I."/>
            <person name="Rezaul K."/>
            <person name="Wu L."/>
            <person name="Eng J.K."/>
            <person name="Rodionov V."/>
            <person name="Han D.K."/>
        </authorList>
    </citation>
    <scope>IDENTIFICATION BY MASS SPECTROMETRY [LARGE SCALE ANALYSIS]</scope>
    <source>
        <tissue>Leukemic T-cell</tissue>
    </source>
</reference>
<reference key="8">
    <citation type="journal article" date="2010" name="Sci. Signal.">
        <title>Quantitative phosphoproteomics reveals widespread full phosphorylation site occupancy during mitosis.</title>
        <authorList>
            <person name="Olsen J.V."/>
            <person name="Vermeulen M."/>
            <person name="Santamaria A."/>
            <person name="Kumar C."/>
            <person name="Miller M.L."/>
            <person name="Jensen L.J."/>
            <person name="Gnad F."/>
            <person name="Cox J."/>
            <person name="Jensen T.S."/>
            <person name="Nigg E.A."/>
            <person name="Brunak S."/>
            <person name="Mann M."/>
        </authorList>
    </citation>
    <scope>PHOSPHORYLATION [LARGE SCALE ANALYSIS] AT SER-203 AND SER-264</scope>
    <scope>IDENTIFICATION BY MASS SPECTROMETRY [LARGE SCALE ANALYSIS]</scope>
    <source>
        <tissue>Cervix carcinoma</tissue>
    </source>
</reference>
<reference key="9">
    <citation type="journal article" date="2011" name="Sci. Signal.">
        <title>System-wide temporal characterization of the proteome and phosphoproteome of human embryonic stem cell differentiation.</title>
        <authorList>
            <person name="Rigbolt K.T."/>
            <person name="Prokhorova T.A."/>
            <person name="Akimov V."/>
            <person name="Henningsen J."/>
            <person name="Johansen P.T."/>
            <person name="Kratchmarova I."/>
            <person name="Kassem M."/>
            <person name="Mann M."/>
            <person name="Olsen J.V."/>
            <person name="Blagoev B."/>
        </authorList>
    </citation>
    <scope>PHOSPHORYLATION [LARGE SCALE ANALYSIS] AT SER-203; SER-205 AND SER-264</scope>
    <scope>IDENTIFICATION BY MASS SPECTROMETRY [LARGE SCALE ANALYSIS]</scope>
</reference>
<reference key="10">
    <citation type="journal article" date="2012" name="Proc. Natl. Acad. Sci. U.S.A.">
        <title>N-terminal acetylome analyses and functional insights of the N-terminal acetyltransferase NatB.</title>
        <authorList>
            <person name="Van Damme P."/>
            <person name="Lasa M."/>
            <person name="Polevoda B."/>
            <person name="Gazquez C."/>
            <person name="Elosegui-Artola A."/>
            <person name="Kim D.S."/>
            <person name="De Juan-Pardo E."/>
            <person name="Demeyer K."/>
            <person name="Hole K."/>
            <person name="Larrea E."/>
            <person name="Timmerman E."/>
            <person name="Prieto J."/>
            <person name="Arnesen T."/>
            <person name="Sherman F."/>
            <person name="Gevaert K."/>
            <person name="Aldabe R."/>
        </authorList>
    </citation>
    <scope>ACETYLATION [LARGE SCALE ANALYSIS] AT ALA-2</scope>
    <scope>CLEAVAGE OF INITIATOR METHIONINE [LARGE SCALE ANALYSIS]</scope>
    <scope>IDENTIFICATION BY MASS SPECTROMETRY [LARGE SCALE ANALYSIS]</scope>
</reference>
<reference key="11">
    <citation type="journal article" date="2013" name="J. Proteome Res.">
        <title>Toward a comprehensive characterization of a human cancer cell phosphoproteome.</title>
        <authorList>
            <person name="Zhou H."/>
            <person name="Di Palma S."/>
            <person name="Preisinger C."/>
            <person name="Peng M."/>
            <person name="Polat A.N."/>
            <person name="Heck A.J."/>
            <person name="Mohammed S."/>
        </authorList>
    </citation>
    <scope>PHOSPHORYLATION [LARGE SCALE ANALYSIS] AT SER-203; SER-264; SER-349; SER-351 AND SER-367</scope>
    <scope>IDENTIFICATION BY MASS SPECTROMETRY [LARGE SCALE ANALYSIS]</scope>
    <source>
        <tissue>Cervix carcinoma</tissue>
        <tissue>Erythroleukemia</tissue>
    </source>
</reference>
<reference key="12">
    <citation type="journal article" date="2014" name="J. Proteomics">
        <title>An enzyme assisted RP-RPLC approach for in-depth analysis of human liver phosphoproteome.</title>
        <authorList>
            <person name="Bian Y."/>
            <person name="Song C."/>
            <person name="Cheng K."/>
            <person name="Dong M."/>
            <person name="Wang F."/>
            <person name="Huang J."/>
            <person name="Sun D."/>
            <person name="Wang L."/>
            <person name="Ye M."/>
            <person name="Zou H."/>
        </authorList>
    </citation>
    <scope>PHOSPHORYLATION [LARGE SCALE ANALYSIS] AT SER-203</scope>
    <scope>IDENTIFICATION BY MASS SPECTROMETRY [LARGE SCALE ANALYSIS]</scope>
    <source>
        <tissue>Liver</tissue>
    </source>
</reference>
<reference key="13">
    <citation type="journal article" date="2015" name="Hum. Mol. Genet.">
        <title>Biochemical and cellular analysis of Ogden syndrome reveals downstream Nt-acetylation defects.</title>
        <authorList>
            <person name="Myklebust L.M."/>
            <person name="Van Damme P."/>
            <person name="Stoeve S.I."/>
            <person name="Doerfel M.J."/>
            <person name="Abboud A."/>
            <person name="Kalvik T.V."/>
            <person name="Grauffel C."/>
            <person name="Jonckheere V."/>
            <person name="Wu Y."/>
            <person name="Swensen J."/>
            <person name="Kaasa H."/>
            <person name="Liszczak G."/>
            <person name="Marmorstein R."/>
            <person name="Reuter N."/>
            <person name="Lyon G.J."/>
            <person name="Gevaert K."/>
            <person name="Arnesen T."/>
        </authorList>
    </citation>
    <scope>ACETYLATION AT ALA-2</scope>
    <scope>CLEAVAGE OF INITIATOR METHIONINE</scope>
</reference>
<reference key="14">
    <citation type="journal article" date="2017" name="Nat. Struct. Mol. Biol.">
        <title>Site-specific mapping of the human SUMO proteome reveals co-modification with phosphorylation.</title>
        <authorList>
            <person name="Hendriks I.A."/>
            <person name="Lyon D."/>
            <person name="Young C."/>
            <person name="Jensen L.J."/>
            <person name="Vertegaal A.C."/>
            <person name="Nielsen M.L."/>
        </authorList>
    </citation>
    <scope>SUMOYLATION [LARGE SCALE ANALYSIS] AT LYS-190 AND LYS-316</scope>
    <scope>IDENTIFICATION BY MASS SPECTROMETRY [LARGE SCALE ANALYSIS]</scope>
</reference>
<sequence>MAQPGTLNLNNEVVKMRKEVKRIRVLVIRKLVRSVGRLKSKKGTEDALLKNQRRAQRLLEEIHAMKELKPDIVTKSALGDDINFEKIFKKPDSTATERAIARLAVHPLLKKKIDVLKAAVQAFKEARQNVAEVESSKNASEDNHSENTLYSNDNGSNLQREATVISEQKVKETKILAKKPIHNSKEKIAKMEHGPKAVTIANSPSKPSEKDSVVSLESQKTPADPKLKTLSQTKKNKGSDSSLSGNSDGGEEFCEEEKEYFDDSTEERFYKQSSMSEDSDSGDDFFIGKVRRTRKKESSCHSSVKEQKPLEKVFLKEDTGETHGDTRNDKIKPSTETRKLESVFFHSLSGSKSSRRNFKEQAPKTRSLDFPQNEPQIKNQFNKKLSGRLENTKQQLQLPLHPSWEASRRRKEQQSNIAVFQGKKITFDD</sequence>
<evidence type="ECO:0000250" key="1">
    <source>
        <dbReference type="UniProtKB" id="Q9CZ91"/>
    </source>
</evidence>
<evidence type="ECO:0000255" key="2"/>
<evidence type="ECO:0000256" key="3">
    <source>
        <dbReference type="SAM" id="MobiDB-lite"/>
    </source>
</evidence>
<evidence type="ECO:0000269" key="4">
    <source>
    </source>
</evidence>
<evidence type="ECO:0000269" key="5">
    <source>
    </source>
</evidence>
<evidence type="ECO:0000305" key="6"/>
<evidence type="ECO:0000312" key="7">
    <source>
        <dbReference type="EMBL" id="AAH17102.1"/>
    </source>
</evidence>
<evidence type="ECO:0000312" key="8">
    <source>
        <dbReference type="EMBL" id="AAH31222.1"/>
    </source>
</evidence>
<evidence type="ECO:0000312" key="9">
    <source>
        <dbReference type="EMBL" id="AAU25829.2"/>
    </source>
</evidence>
<evidence type="ECO:0000312" key="10">
    <source>
        <dbReference type="EMBL" id="BAB71631.1"/>
    </source>
</evidence>
<evidence type="ECO:0000312" key="11">
    <source>
        <dbReference type="EMBL" id="EAW48900.1"/>
    </source>
</evidence>
<evidence type="ECO:0007744" key="12">
    <source>
    </source>
</evidence>
<evidence type="ECO:0007744" key="13">
    <source>
    </source>
</evidence>
<evidence type="ECO:0007744" key="14">
    <source>
    </source>
</evidence>
<evidence type="ECO:0007744" key="15">
    <source>
    </source>
</evidence>
<evidence type="ECO:0007744" key="16">
    <source>
    </source>
</evidence>
<evidence type="ECO:0007744" key="17">
    <source>
    </source>
</evidence>
<evidence type="ECO:0007744" key="18">
    <source>
    </source>
</evidence>
<gene>
    <name evidence="8" type="primary">SRFBP1</name>
</gene>
<keyword id="KW-0007">Acetylation</keyword>
<keyword id="KW-0175">Coiled coil</keyword>
<keyword id="KW-0963">Cytoplasm</keyword>
<keyword id="KW-1017">Isopeptide bond</keyword>
<keyword id="KW-0597">Phosphoprotein</keyword>
<keyword id="KW-1267">Proteomics identification</keyword>
<keyword id="KW-1185">Reference proteome</keyword>
<keyword id="KW-0804">Transcription</keyword>
<keyword id="KW-0805">Transcription regulation</keyword>
<keyword id="KW-0832">Ubl conjugation</keyword>
<protein>
    <recommendedName>
        <fullName>Serum response factor-binding protein 1</fullName>
    </recommendedName>
    <alternativeName>
        <fullName>SRF-dependent transcription regulation-associated protein</fullName>
    </alternativeName>
    <alternativeName>
        <fullName>p49/STRAP</fullName>
    </alternativeName>
</protein>
<proteinExistence type="evidence at protein level"/>
<organism>
    <name type="scientific">Homo sapiens</name>
    <name type="common">Human</name>
    <dbReference type="NCBI Taxonomy" id="9606"/>
    <lineage>
        <taxon>Eukaryota</taxon>
        <taxon>Metazoa</taxon>
        <taxon>Chordata</taxon>
        <taxon>Craniata</taxon>
        <taxon>Vertebrata</taxon>
        <taxon>Euteleostomi</taxon>
        <taxon>Mammalia</taxon>
        <taxon>Eutheria</taxon>
        <taxon>Euarchontoglires</taxon>
        <taxon>Primates</taxon>
        <taxon>Haplorrhini</taxon>
        <taxon>Catarrhini</taxon>
        <taxon>Hominidae</taxon>
        <taxon>Homo</taxon>
    </lineage>
</organism>
<comment type="function">
    <text evidence="1">May be involved in regulating transcriptional activation of cardiac genes during the aging process. May play a role in biosynthesis and/or processing of SLC2A4 in adipose cells (By similarity).</text>
</comment>
<comment type="subunit">
    <text evidence="1">Interacts with SRF. Forms complexes with SRF and SRF cofactors ARID2, MYOCD and NKX2-5. Interacts with the N-terminus of SLC2A4 (By similarity).</text>
</comment>
<comment type="subcellular location">
    <subcellularLocation>
        <location evidence="1">Cytoplasm</location>
        <location evidence="1">Perinuclear region</location>
    </subcellularLocation>
</comment>
<comment type="tissue specificity">
    <text evidence="4">Abundantly expressed in heart and skeletal muscle, and at much lower levels in brain and lung.</text>
</comment>
<comment type="developmental stage">
    <text evidence="4">Up-regulated in adult heart (at protein level).</text>
</comment>
<comment type="sequence caution" evidence="6">
    <conflict type="frameshift">
        <sequence resource="EMBL-CDS" id="BAB71631"/>
    </conflict>
</comment>